<protein>
    <recommendedName>
        <fullName>Metacaspase-1A</fullName>
        <ecNumber>3.4.22.-</ecNumber>
    </recommendedName>
</protein>
<proteinExistence type="inferred from homology"/>
<keyword id="KW-0053">Apoptosis</keyword>
<keyword id="KW-0378">Hydrolase</keyword>
<keyword id="KW-0645">Protease</keyword>
<keyword id="KW-1185">Reference proteome</keyword>
<keyword id="KW-0788">Thiol protease</keyword>
<keyword id="KW-0865">Zymogen</keyword>
<dbReference type="EC" id="3.4.22.-"/>
<dbReference type="EMBL" id="DS027059">
    <property type="protein sequence ID" value="EAW08061.1"/>
    <property type="status" value="ALT_SEQ"/>
    <property type="molecule type" value="Genomic_DNA"/>
</dbReference>
<dbReference type="RefSeq" id="XP_001269487.1">
    <property type="nucleotide sequence ID" value="XM_001269486.1"/>
</dbReference>
<dbReference type="SMR" id="A1CQZ0"/>
<dbReference type="STRING" id="344612.A1CQZ0"/>
<dbReference type="EnsemblFungi" id="EAW08061">
    <property type="protein sequence ID" value="EAW08061"/>
    <property type="gene ID" value="ACLA_027860"/>
</dbReference>
<dbReference type="GeneID" id="4702054"/>
<dbReference type="KEGG" id="act:ACLA_027860"/>
<dbReference type="eggNOG" id="KOG1546">
    <property type="taxonomic scope" value="Eukaryota"/>
</dbReference>
<dbReference type="OrthoDB" id="3223806at2759"/>
<dbReference type="Proteomes" id="UP000006701">
    <property type="component" value="Unassembled WGS sequence"/>
</dbReference>
<dbReference type="GO" id="GO:0005737">
    <property type="term" value="C:cytoplasm"/>
    <property type="evidence" value="ECO:0007669"/>
    <property type="project" value="TreeGrafter"/>
</dbReference>
<dbReference type="GO" id="GO:0004197">
    <property type="term" value="F:cysteine-type endopeptidase activity"/>
    <property type="evidence" value="ECO:0007669"/>
    <property type="project" value="InterPro"/>
</dbReference>
<dbReference type="GO" id="GO:0006915">
    <property type="term" value="P:apoptotic process"/>
    <property type="evidence" value="ECO:0007669"/>
    <property type="project" value="UniProtKB-KW"/>
</dbReference>
<dbReference type="GO" id="GO:0006508">
    <property type="term" value="P:proteolysis"/>
    <property type="evidence" value="ECO:0007669"/>
    <property type="project" value="UniProtKB-KW"/>
</dbReference>
<dbReference type="Gene3D" id="3.40.50.12660">
    <property type="match status" value="1"/>
</dbReference>
<dbReference type="InterPro" id="IPR029030">
    <property type="entry name" value="Caspase-like_dom_sf"/>
</dbReference>
<dbReference type="InterPro" id="IPR050452">
    <property type="entry name" value="Metacaspase"/>
</dbReference>
<dbReference type="InterPro" id="IPR011600">
    <property type="entry name" value="Pept_C14_caspase"/>
</dbReference>
<dbReference type="PANTHER" id="PTHR48104:SF30">
    <property type="entry name" value="METACASPASE-1"/>
    <property type="match status" value="1"/>
</dbReference>
<dbReference type="PANTHER" id="PTHR48104">
    <property type="entry name" value="METACASPASE-4"/>
    <property type="match status" value="1"/>
</dbReference>
<dbReference type="Pfam" id="PF00656">
    <property type="entry name" value="Peptidase_C14"/>
    <property type="match status" value="1"/>
</dbReference>
<dbReference type="SUPFAM" id="SSF52129">
    <property type="entry name" value="Caspase-like"/>
    <property type="match status" value="1"/>
</dbReference>
<sequence>MQHHHQGSYGGGGGGGGYPGQAYREQNPYGYGQQSPQQGYGAPQQHNGYNQPPSGYGQPQHNGGQMYGQRQQGMWLRVRIASRDRKFLTFALGQYQNHYSHPHQGGPPPPPSEPVAFGHGAPQGYNFQYSRCTGKRKALMIGINYFGQKGQLRGCINDVKNMSTYLNQNFGYAREDMVLLTDDQQNPMSQPTKANILRAMHWLVKDAQPNDSLFFHYSGHGGQTPDLDGDEEDGYDEVIYPVDFRQAGHIVDDEMHRIMVQPLRPGVRLTAIFDSCHSGSALDLPYIYSTQGILKEPNLAKEAGQGLLGVVSAYARGDMGSMVSTAVGFLKRAAKGDEAYERTKQTKTSPADVIMWSGSKDSQTSQDAQIAGQATGAMSWAFISALRKNPQQSYVQLLNSIRDELATKYTQKPQLSCSHPLDTNLLYVM</sequence>
<reference key="1">
    <citation type="journal article" date="2008" name="PLoS Genet.">
        <title>Genomic islands in the pathogenic filamentous fungus Aspergillus fumigatus.</title>
        <authorList>
            <person name="Fedorova N.D."/>
            <person name="Khaldi N."/>
            <person name="Joardar V.S."/>
            <person name="Maiti R."/>
            <person name="Amedeo P."/>
            <person name="Anderson M.J."/>
            <person name="Crabtree J."/>
            <person name="Silva J.C."/>
            <person name="Badger J.H."/>
            <person name="Albarraq A."/>
            <person name="Angiuoli S."/>
            <person name="Bussey H."/>
            <person name="Bowyer P."/>
            <person name="Cotty P.J."/>
            <person name="Dyer P.S."/>
            <person name="Egan A."/>
            <person name="Galens K."/>
            <person name="Fraser-Liggett C.M."/>
            <person name="Haas B.J."/>
            <person name="Inman J.M."/>
            <person name="Kent R."/>
            <person name="Lemieux S."/>
            <person name="Malavazi I."/>
            <person name="Orvis J."/>
            <person name="Roemer T."/>
            <person name="Ronning C.M."/>
            <person name="Sundaram J.P."/>
            <person name="Sutton G."/>
            <person name="Turner G."/>
            <person name="Venter J.C."/>
            <person name="White O.R."/>
            <person name="Whitty B.R."/>
            <person name="Youngman P."/>
            <person name="Wolfe K.H."/>
            <person name="Goldman G.H."/>
            <person name="Wortman J.R."/>
            <person name="Jiang B."/>
            <person name="Denning D.W."/>
            <person name="Nierman W.C."/>
        </authorList>
    </citation>
    <scope>NUCLEOTIDE SEQUENCE [LARGE SCALE GENOMIC DNA]</scope>
    <source>
        <strain>ATCC 1007 / CBS 513.65 / DSM 816 / NCTC 3887 / NRRL 1 / QM 1276 / 107</strain>
    </source>
</reference>
<feature type="propeptide" id="PRO_0000333612" evidence="2">
    <location>
        <begin position="1"/>
        <end status="unknown"/>
    </location>
</feature>
<feature type="chain" id="PRO_0000333613" description="Metacaspase-1A">
    <location>
        <begin status="unknown"/>
        <end position="429"/>
    </location>
</feature>
<feature type="region of interest" description="Disordered" evidence="3">
    <location>
        <begin position="1"/>
        <end position="68"/>
    </location>
</feature>
<feature type="compositionally biased region" description="Gly residues" evidence="3">
    <location>
        <begin position="8"/>
        <end position="19"/>
    </location>
</feature>
<feature type="compositionally biased region" description="Low complexity" evidence="3">
    <location>
        <begin position="20"/>
        <end position="45"/>
    </location>
</feature>
<feature type="compositionally biased region" description="Polar residues" evidence="3">
    <location>
        <begin position="46"/>
        <end position="62"/>
    </location>
</feature>
<feature type="active site" evidence="1">
    <location>
        <position position="220"/>
    </location>
</feature>
<feature type="active site" evidence="1">
    <location>
        <position position="276"/>
    </location>
</feature>
<accession>A1CQZ0</accession>
<gene>
    <name type="primary">casA</name>
    <name type="ORF">ACLA_027860</name>
</gene>
<evidence type="ECO:0000250" key="1"/>
<evidence type="ECO:0000255" key="2"/>
<evidence type="ECO:0000256" key="3">
    <source>
        <dbReference type="SAM" id="MobiDB-lite"/>
    </source>
</evidence>
<evidence type="ECO:0000305" key="4"/>
<comment type="function">
    <text evidence="1">Involved in cell death (apoptosis).</text>
</comment>
<comment type="similarity">
    <text evidence="4">Belongs to the peptidase C14B family.</text>
</comment>
<comment type="sequence caution" evidence="4">
    <conflict type="erroneous gene model prediction">
        <sequence resource="EMBL-CDS" id="EAW08061"/>
    </conflict>
</comment>
<organism>
    <name type="scientific">Aspergillus clavatus (strain ATCC 1007 / CBS 513.65 / DSM 816 / NCTC 3887 / NRRL 1 / QM 1276 / 107)</name>
    <dbReference type="NCBI Taxonomy" id="344612"/>
    <lineage>
        <taxon>Eukaryota</taxon>
        <taxon>Fungi</taxon>
        <taxon>Dikarya</taxon>
        <taxon>Ascomycota</taxon>
        <taxon>Pezizomycotina</taxon>
        <taxon>Eurotiomycetes</taxon>
        <taxon>Eurotiomycetidae</taxon>
        <taxon>Eurotiales</taxon>
        <taxon>Aspergillaceae</taxon>
        <taxon>Aspergillus</taxon>
        <taxon>Aspergillus subgen. Fumigati</taxon>
    </lineage>
</organism>
<name>MCA1A_ASPCL</name>